<sequence>MGRGKIEIKRIENSSNRQVTYSKRRNGIMKKAKEISVLCDAHVSVIIFASSGKMHEFCSPSTTLVDMLDHYHKLSGKRLWDPKHEHLDNEINRVKKENDSMQIELRHLKGEDITTLNYKELMVLEDALENGTSALKNKQMEFVRMMRKHNEMVEEENQSLQFKLRQMHLDPMNDNVMESQAVYDHHHHQNIADYEAQMPFAFRVQPMQPNLQERF</sequence>
<dbReference type="EMBL" id="X68831">
    <property type="protein sequence ID" value="CAA48725.1"/>
    <property type="molecule type" value="Genomic_DNA"/>
</dbReference>
<dbReference type="PIR" id="S28062">
    <property type="entry name" value="S28062"/>
</dbReference>
<dbReference type="SMR" id="Q03378"/>
<dbReference type="IntAct" id="Q03378">
    <property type="interactions" value="1"/>
</dbReference>
<dbReference type="GO" id="GO:0005634">
    <property type="term" value="C:nucleus"/>
    <property type="evidence" value="ECO:0007669"/>
    <property type="project" value="UniProtKB-SubCell"/>
</dbReference>
<dbReference type="GO" id="GO:0003700">
    <property type="term" value="F:DNA-binding transcription factor activity"/>
    <property type="evidence" value="ECO:0007669"/>
    <property type="project" value="InterPro"/>
</dbReference>
<dbReference type="GO" id="GO:0046983">
    <property type="term" value="F:protein dimerization activity"/>
    <property type="evidence" value="ECO:0007669"/>
    <property type="project" value="InterPro"/>
</dbReference>
<dbReference type="GO" id="GO:0000977">
    <property type="term" value="F:RNA polymerase II transcription regulatory region sequence-specific DNA binding"/>
    <property type="evidence" value="ECO:0007669"/>
    <property type="project" value="InterPro"/>
</dbReference>
<dbReference type="GO" id="GO:0045944">
    <property type="term" value="P:positive regulation of transcription by RNA polymerase II"/>
    <property type="evidence" value="ECO:0007669"/>
    <property type="project" value="InterPro"/>
</dbReference>
<dbReference type="CDD" id="cd00265">
    <property type="entry name" value="MADS_MEF2_like"/>
    <property type="match status" value="1"/>
</dbReference>
<dbReference type="Gene3D" id="3.40.1810.10">
    <property type="entry name" value="Transcription factor, MADS-box"/>
    <property type="match status" value="1"/>
</dbReference>
<dbReference type="InterPro" id="IPR050142">
    <property type="entry name" value="MADS-box/MEF2_TF"/>
</dbReference>
<dbReference type="InterPro" id="IPR033896">
    <property type="entry name" value="MEF2-like_N"/>
</dbReference>
<dbReference type="InterPro" id="IPR002487">
    <property type="entry name" value="TF_Kbox"/>
</dbReference>
<dbReference type="InterPro" id="IPR002100">
    <property type="entry name" value="TF_MADSbox"/>
</dbReference>
<dbReference type="InterPro" id="IPR036879">
    <property type="entry name" value="TF_MADSbox_sf"/>
</dbReference>
<dbReference type="PANTHER" id="PTHR48019">
    <property type="entry name" value="SERUM RESPONSE FACTOR HOMOLOG"/>
    <property type="match status" value="1"/>
</dbReference>
<dbReference type="Pfam" id="PF01486">
    <property type="entry name" value="K-box"/>
    <property type="match status" value="1"/>
</dbReference>
<dbReference type="Pfam" id="PF00319">
    <property type="entry name" value="SRF-TF"/>
    <property type="match status" value="1"/>
</dbReference>
<dbReference type="PRINTS" id="PR00404">
    <property type="entry name" value="MADSDOMAIN"/>
</dbReference>
<dbReference type="SMART" id="SM00432">
    <property type="entry name" value="MADS"/>
    <property type="match status" value="1"/>
</dbReference>
<dbReference type="SUPFAM" id="SSF55455">
    <property type="entry name" value="SRF-like"/>
    <property type="match status" value="1"/>
</dbReference>
<dbReference type="PROSITE" id="PS51297">
    <property type="entry name" value="K_BOX"/>
    <property type="match status" value="1"/>
</dbReference>
<dbReference type="PROSITE" id="PS00350">
    <property type="entry name" value="MADS_BOX_1"/>
    <property type="match status" value="1"/>
</dbReference>
<dbReference type="PROSITE" id="PS50066">
    <property type="entry name" value="MADS_BOX_2"/>
    <property type="match status" value="1"/>
</dbReference>
<comment type="function">
    <text>Transcription factor involved in the genetic control of flower development. Acts in conjunction with DEFICIENS (defA).</text>
</comment>
<comment type="interaction">
    <interactant intactId="EBI-633469">
        <id>Q03378</id>
    </interactant>
    <interactant intactId="EBI-633463">
        <id>P23706</id>
        <label>DEFA</label>
    </interactant>
    <organismsDiffer>false</organismsDiffer>
    <experiments>6</experiments>
</comment>
<comment type="subcellular location">
    <subcellularLocation>
        <location>Nucleus</location>
    </subcellularLocation>
</comment>
<comment type="miscellaneous">
    <text>Mutations in Glo cause transformation of petals into sepals and stamina into carpels.</text>
</comment>
<reference key="1">
    <citation type="journal article" date="1992" name="EMBO J.">
        <title>GLOBOSA: a homeotic gene which interacts with DEFICIENS in the control of Antirrhinum floral organogenesis.</title>
        <authorList>
            <person name="Troebner W."/>
            <person name="Ramirez L."/>
            <person name="Motte P."/>
            <person name="Hue I."/>
            <person name="Huijser P."/>
            <person name="Loennig W.-E."/>
            <person name="Saedler H."/>
            <person name="Sommer H."/>
            <person name="Schwartz-Sommer Z."/>
        </authorList>
    </citation>
    <scope>NUCLEOTIDE SEQUENCE [GENOMIC DNA]</scope>
</reference>
<feature type="chain" id="PRO_0000199455" description="Floral homeotic protein GLOBOSA">
    <location>
        <begin position="1"/>
        <end position="215"/>
    </location>
</feature>
<feature type="domain" description="MADS-box" evidence="1">
    <location>
        <begin position="3"/>
        <end position="57"/>
    </location>
</feature>
<feature type="domain" description="K-box" evidence="2">
    <location>
        <begin position="84"/>
        <end position="170"/>
    </location>
</feature>
<organism>
    <name type="scientific">Antirrhinum majus</name>
    <name type="common">Garden snapdragon</name>
    <dbReference type="NCBI Taxonomy" id="4151"/>
    <lineage>
        <taxon>Eukaryota</taxon>
        <taxon>Viridiplantae</taxon>
        <taxon>Streptophyta</taxon>
        <taxon>Embryophyta</taxon>
        <taxon>Tracheophyta</taxon>
        <taxon>Spermatophyta</taxon>
        <taxon>Magnoliopsida</taxon>
        <taxon>eudicotyledons</taxon>
        <taxon>Gunneridae</taxon>
        <taxon>Pentapetalae</taxon>
        <taxon>asterids</taxon>
        <taxon>lamiids</taxon>
        <taxon>Lamiales</taxon>
        <taxon>Plantaginaceae</taxon>
        <taxon>Antirrhineae</taxon>
        <taxon>Antirrhinum</taxon>
    </lineage>
</organism>
<evidence type="ECO:0000255" key="1">
    <source>
        <dbReference type="PROSITE-ProRule" id="PRU00251"/>
    </source>
</evidence>
<evidence type="ECO:0000255" key="2">
    <source>
        <dbReference type="PROSITE-ProRule" id="PRU00629"/>
    </source>
</evidence>
<proteinExistence type="evidence at protein level"/>
<accession>Q03378</accession>
<name>GLOB_ANTMA</name>
<keyword id="KW-0010">Activator</keyword>
<keyword id="KW-0217">Developmental protein</keyword>
<keyword id="KW-0238">DNA-binding</keyword>
<keyword id="KW-0539">Nucleus</keyword>
<keyword id="KW-0804">Transcription</keyword>
<keyword id="KW-0805">Transcription regulation</keyword>
<protein>
    <recommendedName>
        <fullName>Floral homeotic protein GLOBOSA</fullName>
    </recommendedName>
</protein>
<gene>
    <name type="primary">GLO</name>
</gene>